<gene>
    <name evidence="1" type="primary">betA</name>
    <name type="ordered locus">SAR2690</name>
</gene>
<proteinExistence type="inferred from homology"/>
<keyword id="KW-0274">FAD</keyword>
<keyword id="KW-0285">Flavoprotein</keyword>
<keyword id="KW-0520">NAD</keyword>
<keyword id="KW-0560">Oxidoreductase</keyword>
<dbReference type="EC" id="1.1.99.1" evidence="1"/>
<dbReference type="EC" id="1.2.1.8" evidence="1"/>
<dbReference type="EMBL" id="BX571856">
    <property type="protein sequence ID" value="CAG41667.1"/>
    <property type="molecule type" value="Genomic_DNA"/>
</dbReference>
<dbReference type="RefSeq" id="WP_000066521.1">
    <property type="nucleotide sequence ID" value="NC_002952.2"/>
</dbReference>
<dbReference type="SMR" id="Q6GDJ1"/>
<dbReference type="KEGG" id="sar:SAR2690"/>
<dbReference type="HOGENOM" id="CLU_002865_7_1_9"/>
<dbReference type="UniPathway" id="UPA00529">
    <property type="reaction ID" value="UER00385"/>
</dbReference>
<dbReference type="Proteomes" id="UP000000596">
    <property type="component" value="Chromosome"/>
</dbReference>
<dbReference type="GO" id="GO:0016020">
    <property type="term" value="C:membrane"/>
    <property type="evidence" value="ECO:0007669"/>
    <property type="project" value="TreeGrafter"/>
</dbReference>
<dbReference type="GO" id="GO:0008802">
    <property type="term" value="F:betaine-aldehyde dehydrogenase (NAD+) activity"/>
    <property type="evidence" value="ECO:0007669"/>
    <property type="project" value="UniProtKB-EC"/>
</dbReference>
<dbReference type="GO" id="GO:0008812">
    <property type="term" value="F:choline dehydrogenase activity"/>
    <property type="evidence" value="ECO:0007669"/>
    <property type="project" value="UniProtKB-UniRule"/>
</dbReference>
<dbReference type="GO" id="GO:0050660">
    <property type="term" value="F:flavin adenine dinucleotide binding"/>
    <property type="evidence" value="ECO:0007669"/>
    <property type="project" value="InterPro"/>
</dbReference>
<dbReference type="GO" id="GO:0019285">
    <property type="term" value="P:glycine betaine biosynthetic process from choline"/>
    <property type="evidence" value="ECO:0007669"/>
    <property type="project" value="UniProtKB-UniRule"/>
</dbReference>
<dbReference type="Gene3D" id="3.50.50.60">
    <property type="entry name" value="FAD/NAD(P)-binding domain"/>
    <property type="match status" value="1"/>
</dbReference>
<dbReference type="Gene3D" id="3.30.560.10">
    <property type="entry name" value="Glucose Oxidase, domain 3"/>
    <property type="match status" value="1"/>
</dbReference>
<dbReference type="HAMAP" id="MF_00750">
    <property type="entry name" value="Choline_dehydrogen"/>
    <property type="match status" value="1"/>
</dbReference>
<dbReference type="InterPro" id="IPR011533">
    <property type="entry name" value="BetA"/>
</dbReference>
<dbReference type="InterPro" id="IPR036188">
    <property type="entry name" value="FAD/NAD-bd_sf"/>
</dbReference>
<dbReference type="InterPro" id="IPR012132">
    <property type="entry name" value="GMC_OxRdtase"/>
</dbReference>
<dbReference type="InterPro" id="IPR000172">
    <property type="entry name" value="GMC_OxRdtase_N"/>
</dbReference>
<dbReference type="InterPro" id="IPR007867">
    <property type="entry name" value="GMC_OxRtase_C"/>
</dbReference>
<dbReference type="NCBIfam" id="TIGR01810">
    <property type="entry name" value="betA"/>
    <property type="match status" value="1"/>
</dbReference>
<dbReference type="NCBIfam" id="NF002550">
    <property type="entry name" value="PRK02106.1"/>
    <property type="match status" value="1"/>
</dbReference>
<dbReference type="PANTHER" id="PTHR11552:SF147">
    <property type="entry name" value="CHOLINE DEHYDROGENASE, MITOCHONDRIAL"/>
    <property type="match status" value="1"/>
</dbReference>
<dbReference type="PANTHER" id="PTHR11552">
    <property type="entry name" value="GLUCOSE-METHANOL-CHOLINE GMC OXIDOREDUCTASE"/>
    <property type="match status" value="1"/>
</dbReference>
<dbReference type="Pfam" id="PF05199">
    <property type="entry name" value="GMC_oxred_C"/>
    <property type="match status" value="1"/>
</dbReference>
<dbReference type="Pfam" id="PF00732">
    <property type="entry name" value="GMC_oxred_N"/>
    <property type="match status" value="1"/>
</dbReference>
<dbReference type="PIRSF" id="PIRSF000137">
    <property type="entry name" value="Alcohol_oxidase"/>
    <property type="match status" value="1"/>
</dbReference>
<dbReference type="SUPFAM" id="SSF54373">
    <property type="entry name" value="FAD-linked reductases, C-terminal domain"/>
    <property type="match status" value="1"/>
</dbReference>
<dbReference type="SUPFAM" id="SSF51905">
    <property type="entry name" value="FAD/NAD(P)-binding domain"/>
    <property type="match status" value="1"/>
</dbReference>
<dbReference type="PROSITE" id="PS00623">
    <property type="entry name" value="GMC_OXRED_1"/>
    <property type="match status" value="1"/>
</dbReference>
<dbReference type="PROSITE" id="PS00624">
    <property type="entry name" value="GMC_OXRED_2"/>
    <property type="match status" value="1"/>
</dbReference>
<name>BETA_STAAR</name>
<comment type="function">
    <text evidence="1">Involved in the biosynthesis of the osmoprotectant glycine betaine. Catalyzes the oxidation of choline to betaine aldehyde and betaine aldehyde to glycine betaine at the same rate.</text>
</comment>
<comment type="catalytic activity">
    <reaction evidence="1">
        <text>choline + A = betaine aldehyde + AH2</text>
        <dbReference type="Rhea" id="RHEA:17433"/>
        <dbReference type="ChEBI" id="CHEBI:13193"/>
        <dbReference type="ChEBI" id="CHEBI:15354"/>
        <dbReference type="ChEBI" id="CHEBI:15710"/>
        <dbReference type="ChEBI" id="CHEBI:17499"/>
        <dbReference type="EC" id="1.1.99.1"/>
    </reaction>
</comment>
<comment type="catalytic activity">
    <reaction evidence="1">
        <text>betaine aldehyde + NAD(+) + H2O = glycine betaine + NADH + 2 H(+)</text>
        <dbReference type="Rhea" id="RHEA:15305"/>
        <dbReference type="ChEBI" id="CHEBI:15377"/>
        <dbReference type="ChEBI" id="CHEBI:15378"/>
        <dbReference type="ChEBI" id="CHEBI:15710"/>
        <dbReference type="ChEBI" id="CHEBI:17750"/>
        <dbReference type="ChEBI" id="CHEBI:57540"/>
        <dbReference type="ChEBI" id="CHEBI:57945"/>
        <dbReference type="EC" id="1.2.1.8"/>
    </reaction>
</comment>
<comment type="cofactor">
    <cofactor evidence="1">
        <name>FAD</name>
        <dbReference type="ChEBI" id="CHEBI:57692"/>
    </cofactor>
</comment>
<comment type="pathway">
    <text evidence="1">Amine and polyamine biosynthesis; betaine biosynthesis via choline pathway; betaine aldehyde from choline (cytochrome c reductase route): step 1/1.</text>
</comment>
<comment type="similarity">
    <text evidence="1">Belongs to the GMC oxidoreductase family.</text>
</comment>
<feature type="chain" id="PRO_0000205598" description="Oxygen-dependent choline dehydrogenase">
    <location>
        <begin position="1"/>
        <end position="569"/>
    </location>
</feature>
<feature type="active site" description="Proton acceptor" evidence="1">
    <location>
        <position position="475"/>
    </location>
</feature>
<feature type="binding site" evidence="1">
    <location>
        <begin position="9"/>
        <end position="38"/>
    </location>
    <ligand>
        <name>FAD</name>
        <dbReference type="ChEBI" id="CHEBI:57692"/>
    </ligand>
</feature>
<protein>
    <recommendedName>
        <fullName evidence="1">Oxygen-dependent choline dehydrogenase</fullName>
        <shortName evidence="1">CDH</shortName>
        <shortName evidence="1">CHD</shortName>
        <ecNumber evidence="1">1.1.99.1</ecNumber>
    </recommendedName>
    <alternativeName>
        <fullName evidence="1">Betaine aldehyde dehydrogenase</fullName>
        <shortName evidence="1">BADH</shortName>
        <ecNumber evidence="1">1.2.1.8</ecNumber>
    </alternativeName>
</protein>
<sequence>MSNKNKSYDYVIIGGGSAGSVLGNRLSEDKDKEVLVLEAGRSDYFWDLFIQMPAALMFPSGNKFYDWIYSTDEEPHMGGRKVAHARGKVLGGSSSINGMIYQRGNPMDYEGWAEPEGMETWDFAHCLPYFKKLEKTYGAAPYDKFRGHDGPIKLKRGPATNPLFQSFFDAGVEAGYHKTPDVNGFRQEGFGPFDSQVHRGRRMSASRAYLHPAMKRKNLTVETRAFVTEIHYEGRRATGVTYKKNGKLHTIDANEVILSGGAFNTPQLLQLSGIGDSEFLKSKGIEPRVHLPGVGENFEDHLEVYIQHKCKEPVSLQPSLDIKRMPFIGLQWIFTRTGAAASNHFEGGGFVRSNNEVDYPNLMFHFLPIAVRYDGQKAAVAHGYQVHVGPMYSNSRGSLKIKSKDPFEKPSIRFNYLSTEEDKKEWVEAIRVARNILSQKAMDPFNGGEISPGPEVQTDEEILDWVRRDGETALHPSCSAKMGPASDPMAVVDPLTMKVHGMENLRVVDASAMPRTTNGNIHAPVLMLAEKAADIIRGRKPLEPQYIDYYKHGVHDENEGAIEVKPYAK</sequence>
<evidence type="ECO:0000255" key="1">
    <source>
        <dbReference type="HAMAP-Rule" id="MF_00750"/>
    </source>
</evidence>
<organism>
    <name type="scientific">Staphylococcus aureus (strain MRSA252)</name>
    <dbReference type="NCBI Taxonomy" id="282458"/>
    <lineage>
        <taxon>Bacteria</taxon>
        <taxon>Bacillati</taxon>
        <taxon>Bacillota</taxon>
        <taxon>Bacilli</taxon>
        <taxon>Bacillales</taxon>
        <taxon>Staphylococcaceae</taxon>
        <taxon>Staphylococcus</taxon>
    </lineage>
</organism>
<reference key="1">
    <citation type="journal article" date="2004" name="Proc. Natl. Acad. Sci. U.S.A.">
        <title>Complete genomes of two clinical Staphylococcus aureus strains: evidence for the rapid evolution of virulence and drug resistance.</title>
        <authorList>
            <person name="Holden M.T.G."/>
            <person name="Feil E.J."/>
            <person name="Lindsay J.A."/>
            <person name="Peacock S.J."/>
            <person name="Day N.P.J."/>
            <person name="Enright M.C."/>
            <person name="Foster T.J."/>
            <person name="Moore C.E."/>
            <person name="Hurst L."/>
            <person name="Atkin R."/>
            <person name="Barron A."/>
            <person name="Bason N."/>
            <person name="Bentley S.D."/>
            <person name="Chillingworth C."/>
            <person name="Chillingworth T."/>
            <person name="Churcher C."/>
            <person name="Clark L."/>
            <person name="Corton C."/>
            <person name="Cronin A."/>
            <person name="Doggett J."/>
            <person name="Dowd L."/>
            <person name="Feltwell T."/>
            <person name="Hance Z."/>
            <person name="Harris B."/>
            <person name="Hauser H."/>
            <person name="Holroyd S."/>
            <person name="Jagels K."/>
            <person name="James K.D."/>
            <person name="Lennard N."/>
            <person name="Line A."/>
            <person name="Mayes R."/>
            <person name="Moule S."/>
            <person name="Mungall K."/>
            <person name="Ormond D."/>
            <person name="Quail M.A."/>
            <person name="Rabbinowitsch E."/>
            <person name="Rutherford K.M."/>
            <person name="Sanders M."/>
            <person name="Sharp S."/>
            <person name="Simmonds M."/>
            <person name="Stevens K."/>
            <person name="Whitehead S."/>
            <person name="Barrell B.G."/>
            <person name="Spratt B.G."/>
            <person name="Parkhill J."/>
        </authorList>
    </citation>
    <scope>NUCLEOTIDE SEQUENCE [LARGE SCALE GENOMIC DNA]</scope>
    <source>
        <strain>MRSA252</strain>
    </source>
</reference>
<accession>Q6GDJ1</accession>